<comment type="function">
    <text evidence="1">This b-type cytochrome is tightly associated with the reaction center of photosystem II (PSII). PSII is a light-driven water:plastoquinone oxidoreductase that uses light energy to abstract electrons from H(2)O, generating O(2) and a proton gradient subsequently used for ATP formation. It consists of a core antenna complex that captures photons, and an electron transfer chain that converts photonic excitation into a charge separation.</text>
</comment>
<comment type="cofactor">
    <cofactor evidence="1">
        <name>heme b</name>
        <dbReference type="ChEBI" id="CHEBI:60344"/>
    </cofactor>
    <text evidence="1">With its partner (PsbE) binds heme. PSII binds additional chlorophylls, carotenoids and specific lipids.</text>
</comment>
<comment type="subunit">
    <text evidence="1">Heterodimer of an alpha subunit and a beta subunit. PSII is composed of 1 copy each of membrane proteins PsbA, PsbB, PsbC, PsbD, PsbE, PsbF, PsbH, PsbI, PsbJ, PsbK, PsbL, PsbM, PsbT, PsbX, PsbY, PsbZ, Psb30/Ycf12, at least 3 peripheral proteins of the oxygen-evolving complex and a large number of cofactors. It forms dimeric complexes.</text>
</comment>
<comment type="subcellular location">
    <subcellularLocation>
        <location evidence="1">Plastid</location>
        <location evidence="1">Chloroplast thylakoid membrane</location>
        <topology evidence="1">Single-pass membrane protein</topology>
    </subcellularLocation>
</comment>
<comment type="similarity">
    <text evidence="1">Belongs to the PsbE/PsbF family.</text>
</comment>
<geneLocation type="chloroplast"/>
<reference key="1">
    <citation type="submission" date="2002-09" db="EMBL/GenBank/DDBJ databases">
        <title>Phylogenetic relationships among the major lineages of Asparagales based on a large chloroplast data set.</title>
        <authorList>
            <person name="McPherson M.A."/>
            <person name="Rai H.S."/>
            <person name="Wong W.A."/>
            <person name="Graham S.W."/>
        </authorList>
    </citation>
    <scope>NUCLEOTIDE SEQUENCE [GENOMIC DNA]</scope>
</reference>
<dbReference type="EMBL" id="AY147580">
    <property type="protein sequence ID" value="AAN32421.1"/>
    <property type="molecule type" value="Genomic_DNA"/>
</dbReference>
<dbReference type="SMR" id="Q67HD3"/>
<dbReference type="GO" id="GO:0009535">
    <property type="term" value="C:chloroplast thylakoid membrane"/>
    <property type="evidence" value="ECO:0007669"/>
    <property type="project" value="UniProtKB-SubCell"/>
</dbReference>
<dbReference type="GO" id="GO:0009539">
    <property type="term" value="C:photosystem II reaction center"/>
    <property type="evidence" value="ECO:0007669"/>
    <property type="project" value="InterPro"/>
</dbReference>
<dbReference type="GO" id="GO:0009055">
    <property type="term" value="F:electron transfer activity"/>
    <property type="evidence" value="ECO:0007669"/>
    <property type="project" value="UniProtKB-UniRule"/>
</dbReference>
<dbReference type="GO" id="GO:0020037">
    <property type="term" value="F:heme binding"/>
    <property type="evidence" value="ECO:0007669"/>
    <property type="project" value="InterPro"/>
</dbReference>
<dbReference type="GO" id="GO:0005506">
    <property type="term" value="F:iron ion binding"/>
    <property type="evidence" value="ECO:0007669"/>
    <property type="project" value="UniProtKB-UniRule"/>
</dbReference>
<dbReference type="GO" id="GO:0009767">
    <property type="term" value="P:photosynthetic electron transport chain"/>
    <property type="evidence" value="ECO:0007669"/>
    <property type="project" value="InterPro"/>
</dbReference>
<dbReference type="HAMAP" id="MF_00643">
    <property type="entry name" value="PSII_PsbF"/>
    <property type="match status" value="1"/>
</dbReference>
<dbReference type="InterPro" id="IPR006241">
    <property type="entry name" value="PSII_cyt_b559_bsu"/>
</dbReference>
<dbReference type="InterPro" id="IPR006216">
    <property type="entry name" value="PSII_cyt_b559_CS"/>
</dbReference>
<dbReference type="InterPro" id="IPR013081">
    <property type="entry name" value="PSII_cyt_b559_N"/>
</dbReference>
<dbReference type="NCBIfam" id="TIGR01333">
    <property type="entry name" value="cyt_b559_beta"/>
    <property type="match status" value="1"/>
</dbReference>
<dbReference type="Pfam" id="PF00283">
    <property type="entry name" value="Cytochrom_B559"/>
    <property type="match status" value="1"/>
</dbReference>
<dbReference type="PIRSF" id="PIRSF000037">
    <property type="entry name" value="PsbF"/>
    <property type="match status" value="1"/>
</dbReference>
<dbReference type="SUPFAM" id="SSF161045">
    <property type="entry name" value="Cytochrome b559 subunits"/>
    <property type="match status" value="1"/>
</dbReference>
<dbReference type="PROSITE" id="PS00537">
    <property type="entry name" value="CYTOCHROME_B559"/>
    <property type="match status" value="1"/>
</dbReference>
<protein>
    <recommendedName>
        <fullName evidence="1">Cytochrome b559 subunit beta</fullName>
    </recommendedName>
    <alternativeName>
        <fullName evidence="1">PSII reaction center subunit VI</fullName>
    </alternativeName>
</protein>
<proteinExistence type="inferred from homology"/>
<feature type="chain" id="PRO_0000200453" description="Cytochrome b559 subunit beta">
    <location>
        <begin position="1"/>
        <end position="39"/>
    </location>
</feature>
<feature type="transmembrane region" description="Helical" evidence="1">
    <location>
        <begin position="14"/>
        <end position="30"/>
    </location>
</feature>
<feature type="binding site" description="axial binding residue" evidence="1">
    <location>
        <position position="18"/>
    </location>
    <ligand>
        <name>heme</name>
        <dbReference type="ChEBI" id="CHEBI:30413"/>
        <note>ligand shared with alpha subunit</note>
    </ligand>
    <ligandPart>
        <name>Fe</name>
        <dbReference type="ChEBI" id="CHEBI:18248"/>
    </ligandPart>
</feature>
<accession>Q67HD3</accession>
<organism>
    <name type="scientific">Sisyrinchium montanum</name>
    <name type="common">Strict blue-eyed grass</name>
    <dbReference type="NCBI Taxonomy" id="207934"/>
    <lineage>
        <taxon>Eukaryota</taxon>
        <taxon>Viridiplantae</taxon>
        <taxon>Streptophyta</taxon>
        <taxon>Embryophyta</taxon>
        <taxon>Tracheophyta</taxon>
        <taxon>Spermatophyta</taxon>
        <taxon>Magnoliopsida</taxon>
        <taxon>Liliopsida</taxon>
        <taxon>Asparagales</taxon>
        <taxon>Iridaceae</taxon>
        <taxon>Iridoideae</taxon>
        <taxon>Sisyrinchieae</taxon>
        <taxon>Sisyrinchium</taxon>
    </lineage>
</organism>
<name>PSBF_SISMO</name>
<keyword id="KW-0150">Chloroplast</keyword>
<keyword id="KW-0249">Electron transport</keyword>
<keyword id="KW-0349">Heme</keyword>
<keyword id="KW-0408">Iron</keyword>
<keyword id="KW-0472">Membrane</keyword>
<keyword id="KW-0479">Metal-binding</keyword>
<keyword id="KW-0602">Photosynthesis</keyword>
<keyword id="KW-0604">Photosystem II</keyword>
<keyword id="KW-0934">Plastid</keyword>
<keyword id="KW-0793">Thylakoid</keyword>
<keyword id="KW-0812">Transmembrane</keyword>
<keyword id="KW-1133">Transmembrane helix</keyword>
<keyword id="KW-0813">Transport</keyword>
<sequence length="39" mass="4424">MTIDRTYPIFTVRWLAVHGLAVPTVSFLGSISAMQFIQR</sequence>
<gene>
    <name evidence="1" type="primary">psbF</name>
</gene>
<evidence type="ECO:0000255" key="1">
    <source>
        <dbReference type="HAMAP-Rule" id="MF_00643"/>
    </source>
</evidence>